<accession>P84092</accession>
<accession>P20172</accession>
<accession>P53679</accession>
<organism>
    <name type="scientific">Rattus norvegicus</name>
    <name type="common">Rat</name>
    <dbReference type="NCBI Taxonomy" id="10116"/>
    <lineage>
        <taxon>Eukaryota</taxon>
        <taxon>Metazoa</taxon>
        <taxon>Chordata</taxon>
        <taxon>Craniata</taxon>
        <taxon>Vertebrata</taxon>
        <taxon>Euteleostomi</taxon>
        <taxon>Mammalia</taxon>
        <taxon>Eutheria</taxon>
        <taxon>Euarchontoglires</taxon>
        <taxon>Glires</taxon>
        <taxon>Rodentia</taxon>
        <taxon>Myomorpha</taxon>
        <taxon>Muroidea</taxon>
        <taxon>Muridae</taxon>
        <taxon>Murinae</taxon>
        <taxon>Rattus</taxon>
    </lineage>
</organism>
<comment type="function">
    <text evidence="2 5 7 8 9 11">Component of the adaptor protein complex 2 (AP-2) (PubMed:14745134, PubMed:15473838). Adaptor protein complexes function in protein transport via transport vesicles in different membrane traffic pathways (PubMed:14745134, PubMed:15473838). Adaptor protein complexes are vesicle coat components and appear to be involved in cargo selection and vesicle formation (PubMed:14745134, PubMed:15473838). AP-2 is involved in clathrin-dependent endocytosis in which cargo proteins are incorporated into vesicles surrounded by clathrin (clathrin-coated vesicles, CCVs) which are destined for fusion with the early endosome (PubMed:14745134, PubMed:15473838). The clathrin lattice serves as a mechanical scaffold but is itself unable to bind directly to membrane components (PubMed:14745134, PubMed:15473838). Clathrin-associated adaptor protein (AP) complexes which can bind directly to both the clathrin lattice and to the lipid and protein components of membranes are considered to be the major clathrin adaptors contributing the CCV formation (PubMed:14745134, PubMed:15473838). AP-2 also serves as a cargo receptor to selectively sort the membrane proteins involved in receptor-mediated endocytosis (PubMed:14745134, PubMed:15473838). AP-2 seems to play a role in the recycling of synaptic vesicle membranes from the presynaptic surface (By similarity). AP-2 recognizes Y-X-X-[FILMV] (Y-X-X-Phi) and [ED]-X-X-X-L-[LI] endocytosis signal motifs within the cytosolic tails of transmembrane cargo molecules (PubMed:15985462). AP-2 may also play a role in maintaining normal post-endocytic trafficking through the ARF6-regulated, non-clathrin pathway (By similarity). During long-term potentiation in hippocampal neurons, AP-2 is responsible for the endocytosis of ADAM10 (By similarity). The AP-2 mu (AP2M1) subunit binds to transmembrane cargo proteins; it recognizes the Y-X-X-Phi motifs (PubMed:15985462). The surface region interacting with to the Y-X-X-Phi motif is inaccessible in cytosolic AP-2, but becomes accessible through a conformational change following phosphorylation of AP-2 mu subunit at Thr-156 in membrane-associated AP-2 (PubMed:11516654, PubMed:15985462). The membrane-specific phosphorylation event appears to involve assembled clathrin which activates the AP-2 mu kinase AAK1 (By similarity). Plays a role in endocytosis of frizzled family members upon Wnt signaling (PubMed:20947020).</text>
</comment>
<comment type="subunit">
    <text evidence="1 2 4 6 9 10 11 12">Adaptor protein complex 2 (AP-2) is a heterotetramer composed of two large adaptins (alpha-type subunit AP2A1 or AP2A2 and beta-type subunit AP2B1), a medium adaptin (mu-type subunit AP2M1) and a small adaptin (sigma-type subunit AP2S1) (PubMed:19140243). Interacts with ATP6V1H and MEGF10 (By similarity). Interacts with EGFR and TTGN1 (PubMed:10228163, PubMed:12121421, PubMed:9812899). Interacts with F2R (By similarity). Interacts with PIP5K1C; tyrosine phosphorylation of PIP5K1C weakens the interaction (By similarity). Interacts with KIAA0319; required for clathrin-mediated endocytosis of KIAA0319 (By similarity). Interacts with DVL2 (via DEP domain) (PubMed:20947020). Interacts with KCNQ1; mediates estrogen-induced internalization via clathrin-coated vesicles (By similarity). Interacts with P2RX4 (via internalization motif) (PubMed:15985462). Together with AP2A1 or AP2A2 and AP2B1, it interacts with ADAM10; this interaction facilitates ADAM10 endocytosis from the plasma membrane during long-term potentiation in hippocampal neurons (By similarity). Probably interacts with ACE2 (via endocytic sorting signal motif); the interaction is inhibited by ACE2 phosphorylation (By similarity). Interacts with RALBP1; the interaction is direct (By similarity). Interacts with TMEM106B (via N-terminus) (By similarity).</text>
</comment>
<comment type="interaction">
    <interactant intactId="EBI-297693">
        <id>P84092</id>
    </interactant>
    <interactant intactId="EBI-77718">
        <id>P19491</id>
        <label>Gria2</label>
    </interactant>
    <organismsDiffer>false</organismsDiffer>
    <experiments>2</experiments>
</comment>
<comment type="interaction">
    <interactant intactId="EBI-297693">
        <id>P84092</id>
    </interactant>
    <interactant intactId="EBI-541446">
        <id>P19814</id>
        <label>Ttgn1</label>
    </interactant>
    <organismsDiffer>false</organismsDiffer>
    <experiments>4</experiments>
</comment>
<comment type="interaction">
    <interactant intactId="EBI-297693">
        <id>P84092</id>
    </interactant>
    <interactant intactId="EBI-432924">
        <id>P63010</id>
        <label>AP2B1</label>
    </interactant>
    <organismsDiffer>true</organismsDiffer>
    <experiments>4</experiments>
</comment>
<comment type="interaction">
    <interactant intactId="EBI-297693">
        <id>P84092</id>
    </interactant>
    <interactant intactId="EBI-641940">
        <id>Q60838</id>
        <label>Dvl2</label>
    </interactant>
    <organismsDiffer>true</organismsDiffer>
    <experiments>4</experiments>
</comment>
<comment type="interaction">
    <interactant intactId="EBI-297693">
        <id>P84092</id>
    </interactant>
    <interactant intactId="EBI-702960">
        <id>P17301</id>
        <label>ITGA2</label>
    </interactant>
    <organismsDiffer>true</organismsDiffer>
    <experiments>2</experiments>
</comment>
<comment type="interaction">
    <interactant intactId="EBI-297693">
        <id>P84092</id>
    </interactant>
    <interactant intactId="EBI-703044">
        <id>P13612</id>
        <label>ITGA4</label>
    </interactant>
    <organismsDiffer>true</organismsDiffer>
    <experiments>2</experiments>
</comment>
<comment type="subcellular location">
    <subcellularLocation>
        <location evidence="2">Cell membrane</location>
    </subcellularLocation>
    <subcellularLocation>
        <location evidence="2">Membrane</location>
        <location evidence="2">Coated pit</location>
        <topology evidence="2">Peripheral membrane protein</topology>
        <orientation evidence="2">Cytoplasmic side</orientation>
    </subcellularLocation>
    <text evidence="1">AP-2 appears to be excluded from internalizing CCVs and to disengage from sites of endocytosis seconds before internalization of the nascent CCV.</text>
</comment>
<comment type="tissue specificity">
    <text>Detected in brain.</text>
</comment>
<comment type="PTM">
    <text evidence="2">Phosphorylation at Thr-156 increases the affinity of the AP-2 complex for cargo membrane proteins during the initial stages of endocytosis.</text>
</comment>
<comment type="similarity">
    <text evidence="13">Belongs to the adaptor complexes medium subunit family.</text>
</comment>
<gene>
    <name type="primary">Ap2m1</name>
</gene>
<feature type="chain" id="PRO_0000193776" description="AP-2 complex subunit mu">
    <location>
        <begin position="1"/>
        <end position="435"/>
    </location>
</feature>
<feature type="domain" description="MHD" evidence="3">
    <location>
        <begin position="170"/>
        <end position="434"/>
    </location>
</feature>
<feature type="binding site" evidence="14 15 17 18">
    <location>
        <position position="341"/>
    </location>
    <ligand>
        <name>a 1,2-diacyl-sn-glycero-3-phospho-(1D-myo-inositol-3,4,5-trisphosphate)</name>
        <dbReference type="ChEBI" id="CHEBI:57836"/>
    </ligand>
</feature>
<feature type="binding site" evidence="14 15 17 18">
    <location>
        <position position="345"/>
    </location>
    <ligand>
        <name>a 1,2-diacyl-sn-glycero-3-phospho-(1D-myo-inositol-3,4,5-trisphosphate)</name>
        <dbReference type="ChEBI" id="CHEBI:57836"/>
    </ligand>
</feature>
<feature type="binding site" evidence="14 15 17 18">
    <location>
        <position position="354"/>
    </location>
    <ligand>
        <name>a 1,2-diacyl-sn-glycero-3-phospho-(1D-myo-inositol-3,4,5-trisphosphate)</name>
        <dbReference type="ChEBI" id="CHEBI:57836"/>
    </ligand>
</feature>
<feature type="modified residue" description="Phosphoserine" evidence="2">
    <location>
        <position position="45"/>
    </location>
</feature>
<feature type="modified residue" description="Phosphothreonine" evidence="2">
    <location>
        <position position="156"/>
    </location>
</feature>
<feature type="mutagenesis site" description="Inhibits endocytosis by AP-2; no effect on membrane association of AP-2." evidence="5">
    <original>T</original>
    <variation>A</variation>
    <location>
        <position position="156"/>
    </location>
</feature>
<feature type="mutagenesis site" description="Abolishes interaction with TTGN1 and EGFR." evidence="4">
    <original>D</original>
    <variation>A</variation>
    <location>
        <position position="176"/>
    </location>
</feature>
<feature type="mutagenesis site" description="Abolishes interaction with TTGN1 and EGFR." evidence="4">
    <original>W</original>
    <variation>A</variation>
    <location>
        <position position="421"/>
    </location>
</feature>
<feature type="strand" evidence="24">
    <location>
        <begin position="4"/>
        <end position="8"/>
    </location>
</feature>
<feature type="strand" evidence="24">
    <location>
        <begin position="14"/>
        <end position="19"/>
    </location>
</feature>
<feature type="strand" evidence="21">
    <location>
        <begin position="21"/>
        <end position="23"/>
    </location>
</feature>
<feature type="helix" evidence="24">
    <location>
        <begin position="26"/>
        <end position="35"/>
    </location>
</feature>
<feature type="turn" evidence="24">
    <location>
        <begin position="36"/>
        <end position="38"/>
    </location>
</feature>
<feature type="strand" evidence="23">
    <location>
        <begin position="40"/>
        <end position="42"/>
    </location>
</feature>
<feature type="strand" evidence="24">
    <location>
        <begin position="46"/>
        <end position="50"/>
    </location>
</feature>
<feature type="strand" evidence="24">
    <location>
        <begin position="53"/>
        <end position="60"/>
    </location>
</feature>
<feature type="strand" evidence="24">
    <location>
        <begin position="63"/>
        <end position="71"/>
    </location>
</feature>
<feature type="helix" evidence="24">
    <location>
        <begin position="75"/>
        <end position="93"/>
    </location>
</feature>
<feature type="helix" evidence="24">
    <location>
        <begin position="98"/>
        <end position="103"/>
    </location>
</feature>
<feature type="helix" evidence="24">
    <location>
        <begin position="105"/>
        <end position="115"/>
    </location>
</feature>
<feature type="helix" evidence="24">
    <location>
        <begin position="126"/>
        <end position="132"/>
    </location>
</feature>
<feature type="helix" evidence="22">
    <location>
        <begin position="145"/>
        <end position="156"/>
    </location>
</feature>
<feature type="turn" evidence="22">
    <location>
        <begin position="160"/>
        <end position="162"/>
    </location>
</feature>
<feature type="strand" evidence="25">
    <location>
        <begin position="172"/>
        <end position="185"/>
    </location>
</feature>
<feature type="strand" evidence="25">
    <location>
        <begin position="191"/>
        <end position="205"/>
    </location>
</feature>
<feature type="strand" evidence="19">
    <location>
        <begin position="207"/>
        <end position="209"/>
    </location>
</feature>
<feature type="strand" evidence="25">
    <location>
        <begin position="211"/>
        <end position="219"/>
    </location>
</feature>
<feature type="helix" evidence="26">
    <location>
        <begin position="221"/>
        <end position="223"/>
    </location>
</feature>
<feature type="strand" evidence="20">
    <location>
        <begin position="238"/>
        <end position="240"/>
    </location>
</feature>
<feature type="strand" evidence="25">
    <location>
        <begin position="244"/>
        <end position="248"/>
    </location>
</feature>
<feature type="strand" evidence="21">
    <location>
        <begin position="252"/>
        <end position="254"/>
    </location>
</feature>
<feature type="strand" evidence="25">
    <location>
        <begin position="256"/>
        <end position="258"/>
    </location>
</feature>
<feature type="turn" evidence="25">
    <location>
        <begin position="259"/>
        <end position="261"/>
    </location>
</feature>
<feature type="strand" evidence="25">
    <location>
        <begin position="262"/>
        <end position="265"/>
    </location>
</feature>
<feature type="strand" evidence="25">
    <location>
        <begin position="269"/>
        <end position="279"/>
    </location>
</feature>
<feature type="strand" evidence="25">
    <location>
        <begin position="287"/>
        <end position="296"/>
    </location>
</feature>
<feature type="turn" evidence="25">
    <location>
        <begin position="297"/>
        <end position="299"/>
    </location>
</feature>
<feature type="strand" evidence="25">
    <location>
        <begin position="300"/>
        <end position="309"/>
    </location>
</feature>
<feature type="strand" evidence="25">
    <location>
        <begin position="316"/>
        <end position="325"/>
    </location>
</feature>
<feature type="strand" evidence="25">
    <location>
        <begin position="330"/>
        <end position="345"/>
    </location>
</feature>
<feature type="helix" evidence="25">
    <location>
        <begin position="346"/>
        <end position="348"/>
    </location>
</feature>
<feature type="strand" evidence="25">
    <location>
        <begin position="350"/>
        <end position="361"/>
    </location>
</feature>
<feature type="strand" evidence="25">
    <location>
        <begin position="363"/>
        <end position="372"/>
    </location>
</feature>
<feature type="strand" evidence="19">
    <location>
        <begin position="377"/>
        <end position="379"/>
    </location>
</feature>
<feature type="strand" evidence="25">
    <location>
        <begin position="386"/>
        <end position="394"/>
    </location>
</feature>
<feature type="turn" evidence="22">
    <location>
        <begin position="396"/>
        <end position="398"/>
    </location>
</feature>
<feature type="strand" evidence="25">
    <location>
        <begin position="401"/>
        <end position="408"/>
    </location>
</feature>
<feature type="turn" evidence="25">
    <location>
        <begin position="409"/>
        <end position="412"/>
    </location>
</feature>
<feature type="helix" evidence="25">
    <location>
        <begin position="415"/>
        <end position="417"/>
    </location>
</feature>
<feature type="strand" evidence="25">
    <location>
        <begin position="418"/>
        <end position="433"/>
    </location>
</feature>
<sequence>MIGGLFIYNHKGEVLISRVYRDDIGRNAVDAFRVNVIHARQQVRSPVTNIARTSFFHVKRSNIWLAAVTKQNVNAAMVFEFLYKMCDVMAAYFGKISEENIKNNFVLIYELLDEILDFGYPQNSETGALKTFITQQGIKSQHQTKEEQSQITSQVTGQIGWRREGIKYRRNELFLDVLESVNLLMSPQGQVLSAHVSGRVVMKSYLSGMPECKFGMNDKIVIEKQGKGTADETSKSGKQSIAIDDCTFHQCVRLSKFDSERSISFIPPDGEFELMRYRTTKDIILPFRVIPLVREVGRTKLEVKVVIKSNFKPSLLAQKIEVRIPTPLNTSGVQVICMKGKAKYKASENAIVWKIKRMAGMKESQISAEIELLPTNDKKKWARPPISMNFEVPFAPSGLKVRYLKVFEPKLNYSDHDVIKWVRYIGRSGIYETRC</sequence>
<reference key="1">
    <citation type="journal article" date="1988" name="DNA">
        <title>Molecular cloning and complete amino acid sequence of AP50, an assembly protein associated with clathrin-coated vesicles.</title>
        <authorList>
            <person name="Thurieau C."/>
            <person name="Brosius J."/>
            <person name="Burne C."/>
            <person name="Jolles P."/>
            <person name="Keen J.H."/>
            <person name="Mattaliano R.J."/>
            <person name="Chow E.P."/>
            <person name="Ramachandran K.L."/>
            <person name="Kirchhausen T."/>
        </authorList>
    </citation>
    <scope>NUCLEOTIDE SEQUENCE [MRNA]</scope>
    <source>
        <tissue>Brain</tissue>
    </source>
</reference>
<reference key="2">
    <citation type="journal article" date="2004" name="Genome Res.">
        <title>The status, quality, and expansion of the NIH full-length cDNA project: the Mammalian Gene Collection (MGC).</title>
        <authorList>
            <consortium name="The MGC Project Team"/>
        </authorList>
    </citation>
    <scope>NUCLEOTIDE SEQUENCE [LARGE SCALE MRNA]</scope>
    <source>
        <tissue>Brain</tissue>
    </source>
</reference>
<reference key="3">
    <citation type="journal article" date="1999" name="EMBO J.">
        <title>Inhibition of the receptor-binding function of clathrin adaptor protein AP-2 by dominant-negative mutant mu2 subunit and its effects on endocytosis.</title>
        <authorList>
            <person name="Nesterov A."/>
            <person name="Carter R.E."/>
            <person name="Sorkina T."/>
            <person name="Gill G.N."/>
            <person name="Sorkin A."/>
        </authorList>
    </citation>
    <scope>INTERACTION WITH EGFR AND TTGN1</scope>
    <scope>MUTAGENESIS OF ASP-176 AND TRP-421</scope>
</reference>
<reference key="4">
    <citation type="journal article" date="2001" name="Curr. Biol.">
        <title>Phosphorylation of threonine 156 of the mu2 subunit of the AP2 complex is essential for endocytosis in vitro and in vivo.</title>
        <authorList>
            <person name="Olusanya O."/>
            <person name="Andrews P.D."/>
            <person name="Swedlow J.R."/>
            <person name="Smythe E."/>
        </authorList>
    </citation>
    <scope>FUNCTION OF THE AP-2 COMPLEX</scope>
    <scope>MUTAGENESIS OF THR-156</scope>
</reference>
<reference key="5">
    <citation type="journal article" date="2003" name="Cell Struct. Funct.">
        <title>Adaptor protein complexes as the key regulators of protein sorting in the post-Golgi network.</title>
        <authorList>
            <person name="Nakatsu F."/>
            <person name="Ohno H."/>
        </authorList>
    </citation>
    <scope>FUNCTION OF THE AP-2 COMPLEX IN CLATHRIN-MEDIATED ENDOCYTOSIS</scope>
</reference>
<reference key="6">
    <citation type="journal article" date="2004" name="Annu. Rev. Cell Dev. Biol.">
        <title>Adaptors for clathrin coats: structure and function.</title>
        <authorList>
            <person name="Owen D.J."/>
            <person name="Collins B.M."/>
            <person name="Evans P.R."/>
        </authorList>
    </citation>
    <scope>FUNCTION OF THE AP-2 COMPLEX IN CLATHRIN-MEDIATED ENDOCYTOSIS</scope>
</reference>
<reference key="7">
    <citation type="journal article" date="1998" name="Science">
        <title>A structural explanation for the recognition of tyrosine-based endocytotic signals.</title>
        <authorList>
            <person name="Owen D.J."/>
            <person name="Evans P.R."/>
        </authorList>
    </citation>
    <scope>X-RAY CRYSTALLOGRAPHY (2.65 ANGSTROMS) OF 159-435 IN COMPLEX WITH EGFR INTERNALIZATION SIGNAL</scope>
</reference>
<reference key="8">
    <citation type="journal article" date="2001" name="Traffic">
        <title>A third specificity-determining site in mu 2 adaptin for sequences upstream of Yxx phi sorting motifs.</title>
        <authorList>
            <person name="Owen D.J."/>
            <person name="Setiadi H."/>
            <person name="Evans P.R."/>
            <person name="McEver R.P."/>
            <person name="Green S.A."/>
        </authorList>
    </citation>
    <scope>X-RAY CRYSTALLOGRAPHY (3 ANGSTROMS) OF 158-435 IN COMPLEX WITH SELP INTERNALIZATION SIGNAL</scope>
</reference>
<reference evidence="17" key="9">
    <citation type="journal article" date="2002" name="Cell">
        <title>Molecular architecture and functional model of the endocytic AP2 complex.</title>
        <authorList>
            <person name="Collins B.M."/>
            <person name="McCoy A.J."/>
            <person name="Kent H.M."/>
            <person name="Evans P.R."/>
            <person name="Owen D.J."/>
        </authorList>
    </citation>
    <scope>X-RAY CRYSTALLOGRAPHY (2.59 ANGSTROMS) IN COMPLEX WITH AP2B1; AP2A2; AP2S1 AND INOSITOL HEXAKISPHOSPHATE</scope>
</reference>
<reference key="10">
    <citation type="journal article" date="2002" name="Traffic">
        <title>The mu2 subunit of the clathrin adaptor AP-2 binds to FDNPVY and YppO sorting signals at distinct sites.</title>
        <authorList>
            <person name="Boll W."/>
            <person name="Rapoport I."/>
            <person name="Brunner C."/>
            <person name="Modis Y."/>
            <person name="Prehn S."/>
            <person name="Kirchhausen T."/>
        </authorList>
    </citation>
    <scope>X-RAY CRYSTALLOGRAPHY (2.5 ANGSTROMS) OF 260-435 IN COMPLEX WITH EGFR INTERNALIZATION SIGNAL</scope>
</reference>
<reference evidence="16" key="11">
    <citation type="journal article" date="2005" name="J. Cell Sci.">
        <title>Non-canonical YXXGPhi endocytic motifs: recognition by AP2 and preferential utilization in P2X4 receptors.</title>
        <authorList>
            <person name="Royle S.J."/>
            <person name="Qureshi O.S."/>
            <person name="Bobanovic L.K."/>
            <person name="Evans P.R."/>
            <person name="Owen D.J."/>
            <person name="Murrell-Lagnado R.D."/>
        </authorList>
    </citation>
    <scope>X-RAY CRYSTALLOGRAPHY (2.80 ANGSTROMS) IN COMPLEX WITH P2RX4 PEPTIDE</scope>
    <scope>FUNCTION</scope>
</reference>
<reference key="12">
    <citation type="journal article" date="2008" name="Nature">
        <title>A structural explanation for the binding of endocytic dileucine motifs by the AP2 complex.</title>
        <authorList>
            <person name="Kelly B.T."/>
            <person name="McCoy A.J."/>
            <person name="Spaete K."/>
            <person name="Miller S.E."/>
            <person name="Evans P.R."/>
            <person name="Hoening S."/>
            <person name="Owen D.J."/>
        </authorList>
    </citation>
    <scope>X-RAY CRYSTALLOGRAPHY (1.60 ANGSTROMS) OF 1-435 IN COMPLEX WITH AP2A2; AP2B1; AP2S1 AND CD4 INTERNALIZATION SIGNAL</scope>
</reference>
<reference key="13">
    <citation type="journal article" date="2010" name="Structure">
        <title>Structural analysis of the interaction between Dishevelled2 and clathrin AP-2 adaptor, a critical step in noncanonical Wnt signaling.</title>
        <authorList>
            <person name="Yu A."/>
            <person name="Xing Y."/>
            <person name="Harrison S.C."/>
            <person name="Kirchhausen T."/>
        </authorList>
    </citation>
    <scope>X-RAY CRYSTALLOGRAPHY (3.5 ANGSTROMS) OF 170-435 IN COMPLEX WITH DVL2</scope>
    <scope>FUNCTION</scope>
    <scope>INTERACTION WITH DVL2</scope>
</reference>
<reference evidence="18" key="14">
    <citation type="journal article" date="2014" name="Science">
        <title>Clathrin adaptors. AP2 controls clathrin polymerization with a membrane-activated switch.</title>
        <authorList>
            <person name="Kelly B.T."/>
            <person name="Graham S.C."/>
            <person name="Liska N."/>
            <person name="Dannhauser P.N."/>
            <person name="Honing S."/>
            <person name="Ungewickell E.J."/>
            <person name="Owen D.J."/>
        </authorList>
    </citation>
    <scope>X-RAY CRYSTALLOGRAPHY (2.79 ANGSTROMS) IN COMPLEX WITH AP2A2; AP2B1; AP2S1 AND INOSITOL HEXAKISPHOSPHATE</scope>
</reference>
<proteinExistence type="evidence at protein level"/>
<protein>
    <recommendedName>
        <fullName>AP-2 complex subunit mu</fullName>
    </recommendedName>
    <alternativeName>
        <fullName>AP-2 mu chain</fullName>
    </alternativeName>
    <alternativeName>
        <fullName>Adaptor protein complex AP-2 subunit mu</fullName>
    </alternativeName>
    <alternativeName>
        <fullName>Adaptor-related protein complex 2 subunit mu</fullName>
    </alternativeName>
    <alternativeName>
        <fullName>Clathrin assembly protein complex 2 mu medium chain</fullName>
    </alternativeName>
    <alternativeName>
        <fullName>Clathrin coat assembly protein AP50</fullName>
    </alternativeName>
    <alternativeName>
        <fullName>Clathrin coat-associated protein AP50</fullName>
    </alternativeName>
    <alternativeName>
        <fullName>Mu2-adaptin</fullName>
    </alternativeName>
    <alternativeName>
        <fullName>Plasma membrane adaptor AP-2 50 kDa protein</fullName>
    </alternativeName>
</protein>
<keyword id="KW-0002">3D-structure</keyword>
<keyword id="KW-1003">Cell membrane</keyword>
<keyword id="KW-0168">Coated pit</keyword>
<keyword id="KW-0254">Endocytosis</keyword>
<keyword id="KW-0446">Lipid-binding</keyword>
<keyword id="KW-0472">Membrane</keyword>
<keyword id="KW-0597">Phosphoprotein</keyword>
<keyword id="KW-0653">Protein transport</keyword>
<keyword id="KW-1185">Reference proteome</keyword>
<keyword id="KW-0813">Transport</keyword>
<evidence type="ECO:0000250" key="1">
    <source>
        <dbReference type="UniProtKB" id="P84091"/>
    </source>
</evidence>
<evidence type="ECO:0000250" key="2">
    <source>
        <dbReference type="UniProtKB" id="Q96CW1"/>
    </source>
</evidence>
<evidence type="ECO:0000255" key="3">
    <source>
        <dbReference type="PROSITE-ProRule" id="PRU00404"/>
    </source>
</evidence>
<evidence type="ECO:0000269" key="4">
    <source>
    </source>
</evidence>
<evidence type="ECO:0000269" key="5">
    <source>
    </source>
</evidence>
<evidence type="ECO:0000269" key="6">
    <source>
    </source>
</evidence>
<evidence type="ECO:0000269" key="7">
    <source>
    </source>
</evidence>
<evidence type="ECO:0000269" key="8">
    <source>
    </source>
</evidence>
<evidence type="ECO:0000269" key="9">
    <source>
    </source>
</evidence>
<evidence type="ECO:0000269" key="10">
    <source>
    </source>
</evidence>
<evidence type="ECO:0000269" key="11">
    <source>
    </source>
</evidence>
<evidence type="ECO:0000269" key="12">
    <source>
    </source>
</evidence>
<evidence type="ECO:0000305" key="13"/>
<evidence type="ECO:0000305" key="14">
    <source>
    </source>
</evidence>
<evidence type="ECO:0000305" key="15">
    <source>
    </source>
</evidence>
<evidence type="ECO:0007744" key="16">
    <source>
        <dbReference type="PDB" id="2BP5"/>
    </source>
</evidence>
<evidence type="ECO:0007744" key="17">
    <source>
        <dbReference type="PDB" id="2VGL"/>
    </source>
</evidence>
<evidence type="ECO:0007744" key="18">
    <source>
        <dbReference type="PDB" id="4UQI"/>
    </source>
</evidence>
<evidence type="ECO:0007829" key="19">
    <source>
        <dbReference type="PDB" id="1I31"/>
    </source>
</evidence>
<evidence type="ECO:0007829" key="20">
    <source>
        <dbReference type="PDB" id="2JKR"/>
    </source>
</evidence>
<evidence type="ECO:0007829" key="21">
    <source>
        <dbReference type="PDB" id="2VGL"/>
    </source>
</evidence>
<evidence type="ECO:0007829" key="22">
    <source>
        <dbReference type="PDB" id="2XA7"/>
    </source>
</evidence>
<evidence type="ECO:0007829" key="23">
    <source>
        <dbReference type="PDB" id="4UQI"/>
    </source>
</evidence>
<evidence type="ECO:0007829" key="24">
    <source>
        <dbReference type="PDB" id="6QH5"/>
    </source>
</evidence>
<evidence type="ECO:0007829" key="25">
    <source>
        <dbReference type="PDB" id="7OFP"/>
    </source>
</evidence>
<evidence type="ECO:0007829" key="26">
    <source>
        <dbReference type="PDB" id="7OI5"/>
    </source>
</evidence>
<dbReference type="EMBL" id="M23674">
    <property type="protein sequence ID" value="AAA72731.1"/>
    <property type="molecule type" value="mRNA"/>
</dbReference>
<dbReference type="EMBL" id="BC087724">
    <property type="protein sequence ID" value="AAH87724.1"/>
    <property type="molecule type" value="mRNA"/>
</dbReference>
<dbReference type="PIR" id="A31596">
    <property type="entry name" value="A31596"/>
</dbReference>
<dbReference type="RefSeq" id="NP_446289.1">
    <property type="nucleotide sequence ID" value="NM_053837.2"/>
</dbReference>
<dbReference type="PDB" id="1BW8">
    <property type="method" value="X-ray"/>
    <property type="resolution" value="2.65 A"/>
    <property type="chains" value="A=122-435"/>
</dbReference>
<dbReference type="PDB" id="1BXX">
    <property type="method" value="X-ray"/>
    <property type="resolution" value="2.70 A"/>
    <property type="chains" value="A=158-435"/>
</dbReference>
<dbReference type="PDB" id="1HES">
    <property type="method" value="X-ray"/>
    <property type="resolution" value="3.00 A"/>
    <property type="chains" value="A=158-435"/>
</dbReference>
<dbReference type="PDB" id="1I31">
    <property type="method" value="X-ray"/>
    <property type="resolution" value="2.50 A"/>
    <property type="chains" value="A=122-435"/>
</dbReference>
<dbReference type="PDB" id="2BP5">
    <property type="method" value="X-ray"/>
    <property type="resolution" value="2.80 A"/>
    <property type="chains" value="M=1-435"/>
</dbReference>
<dbReference type="PDB" id="2JKR">
    <property type="method" value="X-ray"/>
    <property type="resolution" value="2.98 A"/>
    <property type="chains" value="M/U=1-435"/>
</dbReference>
<dbReference type="PDB" id="2JKT">
    <property type="method" value="X-ray"/>
    <property type="resolution" value="3.40 A"/>
    <property type="chains" value="M/U=1-435"/>
</dbReference>
<dbReference type="PDB" id="2PR9">
    <property type="method" value="X-ray"/>
    <property type="resolution" value="2.51 A"/>
    <property type="chains" value="A=158-435"/>
</dbReference>
<dbReference type="PDB" id="2VGL">
    <property type="method" value="X-ray"/>
    <property type="resolution" value="2.59 A"/>
    <property type="chains" value="M=1-435"/>
</dbReference>
<dbReference type="PDB" id="2XA7">
    <property type="method" value="X-ray"/>
    <property type="resolution" value="3.10 A"/>
    <property type="chains" value="M=1-435"/>
</dbReference>
<dbReference type="PDB" id="3H85">
    <property type="method" value="X-ray"/>
    <property type="resolution" value="2.60 A"/>
    <property type="chains" value="A=158-435"/>
</dbReference>
<dbReference type="PDB" id="3ML6">
    <property type="method" value="X-ray"/>
    <property type="resolution" value="3.50 A"/>
    <property type="chains" value="A/B/C/D/E/F=170-435"/>
</dbReference>
<dbReference type="PDB" id="4UQI">
    <property type="method" value="X-ray"/>
    <property type="resolution" value="2.79 A"/>
    <property type="chains" value="M=1-435"/>
</dbReference>
<dbReference type="PDB" id="5C7Z">
    <property type="method" value="X-ray"/>
    <property type="resolution" value="2.77 A"/>
    <property type="chains" value="A=159-435"/>
</dbReference>
<dbReference type="PDB" id="5FPI">
    <property type="method" value="X-ray"/>
    <property type="resolution" value="2.77 A"/>
    <property type="chains" value="A=1-435"/>
</dbReference>
<dbReference type="PDB" id="5WRK">
    <property type="method" value="X-ray"/>
    <property type="resolution" value="2.62 A"/>
    <property type="chains" value="A=158-435"/>
</dbReference>
<dbReference type="PDB" id="5WRL">
    <property type="method" value="X-ray"/>
    <property type="resolution" value="3.10 A"/>
    <property type="chains" value="A=158-435"/>
</dbReference>
<dbReference type="PDB" id="5WRM">
    <property type="method" value="X-ray"/>
    <property type="resolution" value="2.60 A"/>
    <property type="chains" value="A=158-435"/>
</dbReference>
<dbReference type="PDB" id="6QH5">
    <property type="method" value="X-ray"/>
    <property type="resolution" value="2.56 A"/>
    <property type="chains" value="M/N=1-435"/>
</dbReference>
<dbReference type="PDB" id="6QH6">
    <property type="method" value="X-ray"/>
    <property type="resolution" value="5.00 A"/>
    <property type="chains" value="N=1-435"/>
</dbReference>
<dbReference type="PDB" id="6RH6">
    <property type="method" value="NMR"/>
    <property type="chains" value="B=149-163"/>
</dbReference>
<dbReference type="PDB" id="6YAE">
    <property type="method" value="EM"/>
    <property type="resolution" value="3.90 A"/>
    <property type="chains" value="M=1-435"/>
</dbReference>
<dbReference type="PDB" id="6YAF">
    <property type="method" value="EM"/>
    <property type="resolution" value="9.10 A"/>
    <property type="chains" value="M=1-435"/>
</dbReference>
<dbReference type="PDB" id="6YAH">
    <property type="method" value="EM"/>
    <property type="resolution" value="10.20 A"/>
    <property type="chains" value="M=1-435"/>
</dbReference>
<dbReference type="PDB" id="7OFP">
    <property type="method" value="X-ray"/>
    <property type="resolution" value="1.92 A"/>
    <property type="chains" value="A/B=158-435"/>
</dbReference>
<dbReference type="PDB" id="7OG1">
    <property type="method" value="X-ray"/>
    <property type="resolution" value="3.25 A"/>
    <property type="chains" value="CCC/MMM=1-435"/>
</dbReference>
<dbReference type="PDB" id="7OHO">
    <property type="method" value="X-ray"/>
    <property type="resolution" value="2.88 A"/>
    <property type="chains" value="MMM=1-435"/>
</dbReference>
<dbReference type="PDB" id="7OHZ">
    <property type="method" value="X-ray"/>
    <property type="resolution" value="2.27 A"/>
    <property type="chains" value="A/B=158-435"/>
</dbReference>
<dbReference type="PDB" id="7OI5">
    <property type="method" value="X-ray"/>
    <property type="resolution" value="2.61 A"/>
    <property type="chains" value="B/D=158-435"/>
</dbReference>
<dbReference type="PDB" id="7OIQ">
    <property type="method" value="X-ray"/>
    <property type="resolution" value="1.85 A"/>
    <property type="chains" value="AAA/BBB=158-435"/>
</dbReference>
<dbReference type="PDB" id="7Z5C">
    <property type="method" value="EM"/>
    <property type="resolution" value="4.16 A"/>
    <property type="chains" value="M=1-435"/>
</dbReference>
<dbReference type="PDBsum" id="1BW8"/>
<dbReference type="PDBsum" id="1BXX"/>
<dbReference type="PDBsum" id="1HES"/>
<dbReference type="PDBsum" id="1I31"/>
<dbReference type="PDBsum" id="2BP5"/>
<dbReference type="PDBsum" id="2JKR"/>
<dbReference type="PDBsum" id="2JKT"/>
<dbReference type="PDBsum" id="2PR9"/>
<dbReference type="PDBsum" id="2VGL"/>
<dbReference type="PDBsum" id="2XA7"/>
<dbReference type="PDBsum" id="3H85"/>
<dbReference type="PDBsum" id="3ML6"/>
<dbReference type="PDBsum" id="4UQI"/>
<dbReference type="PDBsum" id="5C7Z"/>
<dbReference type="PDBsum" id="5FPI"/>
<dbReference type="PDBsum" id="5WRK"/>
<dbReference type="PDBsum" id="5WRL"/>
<dbReference type="PDBsum" id="5WRM"/>
<dbReference type="PDBsum" id="6QH5"/>
<dbReference type="PDBsum" id="6QH6"/>
<dbReference type="PDBsum" id="6RH6"/>
<dbReference type="PDBsum" id="6YAE"/>
<dbReference type="PDBsum" id="6YAF"/>
<dbReference type="PDBsum" id="6YAH"/>
<dbReference type="PDBsum" id="7OFP"/>
<dbReference type="PDBsum" id="7OG1"/>
<dbReference type="PDBsum" id="7OHO"/>
<dbReference type="PDBsum" id="7OHZ"/>
<dbReference type="PDBsum" id="7OI5"/>
<dbReference type="PDBsum" id="7OIQ"/>
<dbReference type="PDBsum" id="7Z5C"/>
<dbReference type="EMDB" id="EMD-10747"/>
<dbReference type="EMDB" id="EMD-10748"/>
<dbReference type="EMDB" id="EMD-10751"/>
<dbReference type="EMDB" id="EMD-14517"/>
<dbReference type="SMR" id="P84092"/>
<dbReference type="BioGRID" id="250498">
    <property type="interactions" value="11"/>
</dbReference>
<dbReference type="CORUM" id="P84092"/>
<dbReference type="DIP" id="DIP-29761N"/>
<dbReference type="FunCoup" id="P84092">
    <property type="interactions" value="2959"/>
</dbReference>
<dbReference type="IntAct" id="P84092">
    <property type="interactions" value="24"/>
</dbReference>
<dbReference type="MINT" id="P84092"/>
<dbReference type="STRING" id="10116.ENSRNOP00000070202"/>
<dbReference type="iPTMnet" id="P84092"/>
<dbReference type="PhosphoSitePlus" id="P84092"/>
<dbReference type="SwissPalm" id="P84092"/>
<dbReference type="jPOST" id="P84092"/>
<dbReference type="PaxDb" id="10116-ENSRNOP00000054900"/>
<dbReference type="Ensembl" id="ENSRNOT00000088821.2">
    <property type="protein sequence ID" value="ENSRNOP00000070202.1"/>
    <property type="gene ID" value="ENSRNOG00000001709.8"/>
</dbReference>
<dbReference type="GeneID" id="116563"/>
<dbReference type="KEGG" id="rno:116563"/>
<dbReference type="AGR" id="RGD:620135"/>
<dbReference type="CTD" id="1173"/>
<dbReference type="RGD" id="620135">
    <property type="gene designation" value="Ap2m1"/>
</dbReference>
<dbReference type="eggNOG" id="KOG0938">
    <property type="taxonomic scope" value="Eukaryota"/>
</dbReference>
<dbReference type="GeneTree" id="ENSGT00940000159223"/>
<dbReference type="HOGENOM" id="CLU_026996_5_2_1"/>
<dbReference type="InParanoid" id="P84092"/>
<dbReference type="OMA" id="VWKIPRI"/>
<dbReference type="OrthoDB" id="10259133at2759"/>
<dbReference type="PhylomeDB" id="P84092"/>
<dbReference type="TreeFam" id="TF300722"/>
<dbReference type="Reactome" id="R-RNO-177504">
    <property type="pathway name" value="Retrograde neurotrophin signalling"/>
</dbReference>
<dbReference type="Reactome" id="R-RNO-190873">
    <property type="pathway name" value="Gap junction degradation"/>
</dbReference>
<dbReference type="Reactome" id="R-RNO-196025">
    <property type="pathway name" value="Formation of annular gap junctions"/>
</dbReference>
<dbReference type="Reactome" id="R-RNO-2132295">
    <property type="pathway name" value="MHC class II antigen presentation"/>
</dbReference>
<dbReference type="Reactome" id="R-RNO-416993">
    <property type="pathway name" value="Trafficking of GluR2-containing AMPA receptors"/>
</dbReference>
<dbReference type="Reactome" id="R-RNO-437239">
    <property type="pathway name" value="Recycling pathway of L1"/>
</dbReference>
<dbReference type="Reactome" id="R-RNO-5099900">
    <property type="pathway name" value="WNT5A-dependent internalization of FZD4"/>
</dbReference>
<dbReference type="Reactome" id="R-RNO-5140745">
    <property type="pathway name" value="WNT5A-dependent internalization of FZD2, FZD5 and ROR2"/>
</dbReference>
<dbReference type="Reactome" id="R-RNO-8856825">
    <property type="pathway name" value="Cargo recognition for clathrin-mediated endocytosis"/>
</dbReference>
<dbReference type="Reactome" id="R-RNO-8856828">
    <property type="pathway name" value="Clathrin-mediated endocytosis"/>
</dbReference>
<dbReference type="Reactome" id="R-RNO-8866427">
    <property type="pathway name" value="VLDLR internalisation and degradation"/>
</dbReference>
<dbReference type="Reactome" id="R-RNO-8964038">
    <property type="pathway name" value="LDL clearance"/>
</dbReference>
<dbReference type="EvolutionaryTrace" id="P84092"/>
<dbReference type="PRO" id="PR:P84092"/>
<dbReference type="Proteomes" id="UP000002494">
    <property type="component" value="Chromosome 11"/>
</dbReference>
<dbReference type="Bgee" id="ENSRNOG00000001709">
    <property type="expression patterns" value="Expressed in frontal cortex and 19 other cell types or tissues"/>
</dbReference>
<dbReference type="ExpressionAtlas" id="P84092">
    <property type="expression patterns" value="baseline and differential"/>
</dbReference>
<dbReference type="GO" id="GO:0030122">
    <property type="term" value="C:AP-2 adaptor complex"/>
    <property type="evidence" value="ECO:0000314"/>
    <property type="project" value="CAFA"/>
</dbReference>
<dbReference type="GO" id="GO:0005905">
    <property type="term" value="C:clathrin-coated pit"/>
    <property type="evidence" value="ECO:0000266"/>
    <property type="project" value="RGD"/>
</dbReference>
<dbReference type="GO" id="GO:0031410">
    <property type="term" value="C:cytoplasmic vesicle"/>
    <property type="evidence" value="ECO:0000318"/>
    <property type="project" value="GO_Central"/>
</dbReference>
<dbReference type="GO" id="GO:0098894">
    <property type="term" value="C:extrinsic component of presynaptic endocytic zone membrane"/>
    <property type="evidence" value="ECO:0000314"/>
    <property type="project" value="SynGO"/>
</dbReference>
<dbReference type="GO" id="GO:0098978">
    <property type="term" value="C:glutamatergic synapse"/>
    <property type="evidence" value="ECO:0000314"/>
    <property type="project" value="SynGO"/>
</dbReference>
<dbReference type="GO" id="GO:0005886">
    <property type="term" value="C:plasma membrane"/>
    <property type="evidence" value="ECO:0000304"/>
    <property type="project" value="Reactome"/>
</dbReference>
<dbReference type="GO" id="GO:0098794">
    <property type="term" value="C:postsynapse"/>
    <property type="evidence" value="ECO:0007669"/>
    <property type="project" value="GOC"/>
</dbReference>
<dbReference type="GO" id="GO:0045202">
    <property type="term" value="C:synapse"/>
    <property type="evidence" value="ECO:0000266"/>
    <property type="project" value="RGD"/>
</dbReference>
<dbReference type="GO" id="GO:0008021">
    <property type="term" value="C:synaptic vesicle"/>
    <property type="evidence" value="ECO:0000314"/>
    <property type="project" value="SynGO"/>
</dbReference>
<dbReference type="GO" id="GO:0043195">
    <property type="term" value="C:terminal bouton"/>
    <property type="evidence" value="ECO:0007005"/>
    <property type="project" value="ParkinsonsUK-UCL"/>
</dbReference>
<dbReference type="GO" id="GO:0035615">
    <property type="term" value="F:clathrin adaptor activity"/>
    <property type="evidence" value="ECO:0000318"/>
    <property type="project" value="GO_Central"/>
</dbReference>
<dbReference type="GO" id="GO:0097718">
    <property type="term" value="F:disordered domain specific binding"/>
    <property type="evidence" value="ECO:0000266"/>
    <property type="project" value="RGD"/>
</dbReference>
<dbReference type="GO" id="GO:0008289">
    <property type="term" value="F:lipid binding"/>
    <property type="evidence" value="ECO:0007669"/>
    <property type="project" value="UniProtKB-KW"/>
</dbReference>
<dbReference type="GO" id="GO:0050750">
    <property type="term" value="F:low-density lipoprotein particle receptor binding"/>
    <property type="evidence" value="ECO:0000314"/>
    <property type="project" value="BHF-UCL"/>
</dbReference>
<dbReference type="GO" id="GO:0005048">
    <property type="term" value="F:signal sequence binding"/>
    <property type="evidence" value="ECO:0000314"/>
    <property type="project" value="BHF-UCL"/>
</dbReference>
<dbReference type="GO" id="GO:0044325">
    <property type="term" value="F:transmembrane transporter binding"/>
    <property type="evidence" value="ECO:0000266"/>
    <property type="project" value="RGD"/>
</dbReference>
<dbReference type="GO" id="GO:0072583">
    <property type="term" value="P:clathrin-dependent endocytosis"/>
    <property type="evidence" value="ECO:0000266"/>
    <property type="project" value="RGD"/>
</dbReference>
<dbReference type="GO" id="GO:0006886">
    <property type="term" value="P:intracellular protein transport"/>
    <property type="evidence" value="ECO:0007669"/>
    <property type="project" value="InterPro"/>
</dbReference>
<dbReference type="GO" id="GO:1903077">
    <property type="term" value="P:negative regulation of protein localization to plasma membrane"/>
    <property type="evidence" value="ECO:0000266"/>
    <property type="project" value="RGD"/>
</dbReference>
<dbReference type="GO" id="GO:0002092">
    <property type="term" value="P:positive regulation of receptor internalization"/>
    <property type="evidence" value="ECO:0000315"/>
    <property type="project" value="RGD"/>
</dbReference>
<dbReference type="GO" id="GO:1900244">
    <property type="term" value="P:positive regulation of synaptic vesicle endocytosis"/>
    <property type="evidence" value="ECO:0000315"/>
    <property type="project" value="RGD"/>
</dbReference>
<dbReference type="GO" id="GO:0098884">
    <property type="term" value="P:postsynaptic neurotransmitter receptor internalization"/>
    <property type="evidence" value="ECO:0000314"/>
    <property type="project" value="SynGO"/>
</dbReference>
<dbReference type="GO" id="GO:0065003">
    <property type="term" value="P:protein-containing complex assembly"/>
    <property type="evidence" value="ECO:0000314"/>
    <property type="project" value="RGD"/>
</dbReference>
<dbReference type="GO" id="GO:0031623">
    <property type="term" value="P:receptor internalization"/>
    <property type="evidence" value="ECO:0000266"/>
    <property type="project" value="RGD"/>
</dbReference>
<dbReference type="GO" id="GO:0097494">
    <property type="term" value="P:regulation of vesicle size"/>
    <property type="evidence" value="ECO:0000266"/>
    <property type="project" value="RGD"/>
</dbReference>
<dbReference type="GO" id="GO:0048488">
    <property type="term" value="P:synaptic vesicle endocytosis"/>
    <property type="evidence" value="ECO:0000314"/>
    <property type="project" value="SynGO"/>
</dbReference>
<dbReference type="GO" id="GO:0006900">
    <property type="term" value="P:vesicle budding from membrane"/>
    <property type="evidence" value="ECO:0000266"/>
    <property type="project" value="RGD"/>
</dbReference>
<dbReference type="CDD" id="cd09251">
    <property type="entry name" value="AP-2_Mu2_Cterm"/>
    <property type="match status" value="1"/>
</dbReference>
<dbReference type="CDD" id="cd14836">
    <property type="entry name" value="AP2_Mu_N"/>
    <property type="match status" value="1"/>
</dbReference>
<dbReference type="DisProt" id="DP00455"/>
<dbReference type="FunFam" id="2.60.40.1170:FF:000008">
    <property type="entry name" value="AP-2 complex subunit mu isoform 2"/>
    <property type="match status" value="1"/>
</dbReference>
<dbReference type="FunFam" id="3.30.450.60:FF:000002">
    <property type="entry name" value="AP-2 complex subunit mu, putative"/>
    <property type="match status" value="1"/>
</dbReference>
<dbReference type="Gene3D" id="3.30.450.60">
    <property type="match status" value="1"/>
</dbReference>
<dbReference type="Gene3D" id="2.60.40.1170">
    <property type="entry name" value="Mu homology domain, subdomain B"/>
    <property type="match status" value="2"/>
</dbReference>
<dbReference type="IDEAL" id="IID50122"/>
<dbReference type="InterPro" id="IPR050431">
    <property type="entry name" value="Adaptor_comp_med_subunit"/>
</dbReference>
<dbReference type="InterPro" id="IPR036168">
    <property type="entry name" value="AP2_Mu_C_sf"/>
</dbReference>
<dbReference type="InterPro" id="IPR043532">
    <property type="entry name" value="AP2_Mu_N"/>
</dbReference>
<dbReference type="InterPro" id="IPR022775">
    <property type="entry name" value="AP_mu_sigma_su"/>
</dbReference>
<dbReference type="InterPro" id="IPR001392">
    <property type="entry name" value="Clathrin_mu"/>
</dbReference>
<dbReference type="InterPro" id="IPR018240">
    <property type="entry name" value="Clathrin_mu_CS"/>
</dbReference>
<dbReference type="InterPro" id="IPR011012">
    <property type="entry name" value="Longin-like_dom_sf"/>
</dbReference>
<dbReference type="InterPro" id="IPR028565">
    <property type="entry name" value="MHD"/>
</dbReference>
<dbReference type="InterPro" id="IPR043512">
    <property type="entry name" value="Mu2_C"/>
</dbReference>
<dbReference type="PANTHER" id="PTHR10529">
    <property type="entry name" value="AP COMPLEX SUBUNIT MU"/>
    <property type="match status" value="1"/>
</dbReference>
<dbReference type="Pfam" id="PF00928">
    <property type="entry name" value="Adap_comp_sub"/>
    <property type="match status" value="1"/>
</dbReference>
<dbReference type="Pfam" id="PF01217">
    <property type="entry name" value="Clat_adaptor_s"/>
    <property type="match status" value="1"/>
</dbReference>
<dbReference type="PIRSF" id="PIRSF005992">
    <property type="entry name" value="Clathrin_mu"/>
    <property type="match status" value="1"/>
</dbReference>
<dbReference type="PRINTS" id="PR00314">
    <property type="entry name" value="CLATHRINADPT"/>
</dbReference>
<dbReference type="SUPFAM" id="SSF49447">
    <property type="entry name" value="Second domain of Mu2 adaptin subunit (ap50) of ap2 adaptor"/>
    <property type="match status" value="1"/>
</dbReference>
<dbReference type="SUPFAM" id="SSF64356">
    <property type="entry name" value="SNARE-like"/>
    <property type="match status" value="1"/>
</dbReference>
<dbReference type="PROSITE" id="PS00990">
    <property type="entry name" value="CLAT_ADAPTOR_M_1"/>
    <property type="match status" value="1"/>
</dbReference>
<dbReference type="PROSITE" id="PS00991">
    <property type="entry name" value="CLAT_ADAPTOR_M_2"/>
    <property type="match status" value="1"/>
</dbReference>
<dbReference type="PROSITE" id="PS51072">
    <property type="entry name" value="MHD"/>
    <property type="match status" value="1"/>
</dbReference>
<name>AP2M1_RAT</name>